<gene>
    <name evidence="1" type="primary">kdpA</name>
    <name type="ordered locus">BPSL1171</name>
</gene>
<evidence type="ECO:0000255" key="1">
    <source>
        <dbReference type="HAMAP-Rule" id="MF_00275"/>
    </source>
</evidence>
<sequence>MNANNLLQAAIFIVVLIAAAVPVARYLTRVMDGSSAVVRVFGPLERALYRFAGIDPRTEMSWKQYALATVAFNALGVLFLYALLRVQGWLPGNPQGFGPMTVDGALNTAVSFVTNTNWQDYTPEQTVSYLAQMLGLTVQNFLSAATGIVVVLALIRGFARHTAQTIGNFWVDVTRVTLYVLVPMAAIIAALLMSQGVIQNTKAYQDVPTLQTTSYAAPRLDAQGNPVKDAKGNPVTVQTSVKAQTLAMGPVASQEAIKMLGTNGGGFFNGNSSHPYENPTPFSNFLEIFAILIIPAALCLVFGNTIGDRRQGVAVLAAMTVALAAAIGIETSAEQGGTPVLASLNVDLAASPLQAGGNMEGKETRFGIAQTGLFVVATTAASCGAVDAMHDSLTPVGGLVPMLLMQLGEVIFGGVGSGLYGMLVFALLAVFVAGLMIGRTPEYVGKKIESYEMKMVSIVVLLTPLLVLVGTSIAVLADAGRAGIANPGPHGFSEILYAFSSAANNNGSAFGGLSVNTPFYNWMTAIAMWFGRFGTIVPVLAIAGSLAAKKRIAATSGTLPTHGPLFVVLLLGTVLLVGALTYMPALALGPGVEHLMLFVGAH</sequence>
<keyword id="KW-0997">Cell inner membrane</keyword>
<keyword id="KW-1003">Cell membrane</keyword>
<keyword id="KW-0406">Ion transport</keyword>
<keyword id="KW-0472">Membrane</keyword>
<keyword id="KW-0630">Potassium</keyword>
<keyword id="KW-0633">Potassium transport</keyword>
<keyword id="KW-1185">Reference proteome</keyword>
<keyword id="KW-0812">Transmembrane</keyword>
<keyword id="KW-1133">Transmembrane helix</keyword>
<keyword id="KW-0813">Transport</keyword>
<accession>Q63VS3</accession>
<proteinExistence type="inferred from homology"/>
<dbReference type="EMBL" id="BX571965">
    <property type="protein sequence ID" value="CAH35166.1"/>
    <property type="molecule type" value="Genomic_DNA"/>
</dbReference>
<dbReference type="RefSeq" id="WP_004550718.1">
    <property type="nucleotide sequence ID" value="NC_006350.1"/>
</dbReference>
<dbReference type="RefSeq" id="YP_107793.1">
    <property type="nucleotide sequence ID" value="NC_006350.1"/>
</dbReference>
<dbReference type="SMR" id="Q63VS3"/>
<dbReference type="STRING" id="272560.BPSL1171"/>
<dbReference type="KEGG" id="bps:BPSL1171"/>
<dbReference type="PATRIC" id="fig|272560.51.peg.363"/>
<dbReference type="eggNOG" id="COG2060">
    <property type="taxonomic scope" value="Bacteria"/>
</dbReference>
<dbReference type="Proteomes" id="UP000000605">
    <property type="component" value="Chromosome 1"/>
</dbReference>
<dbReference type="GO" id="GO:0005886">
    <property type="term" value="C:plasma membrane"/>
    <property type="evidence" value="ECO:0007669"/>
    <property type="project" value="UniProtKB-SubCell"/>
</dbReference>
<dbReference type="GO" id="GO:0008556">
    <property type="term" value="F:P-type potassium transmembrane transporter activity"/>
    <property type="evidence" value="ECO:0007669"/>
    <property type="project" value="InterPro"/>
</dbReference>
<dbReference type="GO" id="GO:0030955">
    <property type="term" value="F:potassium ion binding"/>
    <property type="evidence" value="ECO:0007669"/>
    <property type="project" value="UniProtKB-UniRule"/>
</dbReference>
<dbReference type="HAMAP" id="MF_00275">
    <property type="entry name" value="KdpA"/>
    <property type="match status" value="1"/>
</dbReference>
<dbReference type="InterPro" id="IPR004623">
    <property type="entry name" value="KdpA"/>
</dbReference>
<dbReference type="NCBIfam" id="TIGR00680">
    <property type="entry name" value="kdpA"/>
    <property type="match status" value="1"/>
</dbReference>
<dbReference type="PANTHER" id="PTHR30607">
    <property type="entry name" value="POTASSIUM-TRANSPORTING ATPASE A CHAIN"/>
    <property type="match status" value="1"/>
</dbReference>
<dbReference type="PANTHER" id="PTHR30607:SF2">
    <property type="entry name" value="POTASSIUM-TRANSPORTING ATPASE POTASSIUM-BINDING SUBUNIT"/>
    <property type="match status" value="1"/>
</dbReference>
<dbReference type="Pfam" id="PF03814">
    <property type="entry name" value="KdpA"/>
    <property type="match status" value="1"/>
</dbReference>
<dbReference type="PIRSF" id="PIRSF001294">
    <property type="entry name" value="K_ATPaseA"/>
    <property type="match status" value="1"/>
</dbReference>
<protein>
    <recommendedName>
        <fullName evidence="1">Potassium-transporting ATPase potassium-binding subunit</fullName>
    </recommendedName>
    <alternativeName>
        <fullName evidence="1">ATP phosphohydrolase [potassium-transporting] A chain</fullName>
    </alternativeName>
    <alternativeName>
        <fullName evidence="1">Potassium-binding and translocating subunit A</fullName>
    </alternativeName>
    <alternativeName>
        <fullName evidence="1">Potassium-translocating ATPase A chain</fullName>
    </alternativeName>
</protein>
<organism>
    <name type="scientific">Burkholderia pseudomallei (strain K96243)</name>
    <dbReference type="NCBI Taxonomy" id="272560"/>
    <lineage>
        <taxon>Bacteria</taxon>
        <taxon>Pseudomonadati</taxon>
        <taxon>Pseudomonadota</taxon>
        <taxon>Betaproteobacteria</taxon>
        <taxon>Burkholderiales</taxon>
        <taxon>Burkholderiaceae</taxon>
        <taxon>Burkholderia</taxon>
        <taxon>pseudomallei group</taxon>
    </lineage>
</organism>
<comment type="function">
    <text evidence="1">Part of the high-affinity ATP-driven potassium transport (or Kdp) system, which catalyzes the hydrolysis of ATP coupled with the electrogenic transport of potassium into the cytoplasm. This subunit binds the periplasmic potassium ions and delivers the ions to the membrane domain of KdpB through an intramembrane tunnel.</text>
</comment>
<comment type="subunit">
    <text evidence="1">The system is composed of three essential subunits: KdpA, KdpB and KdpC.</text>
</comment>
<comment type="subcellular location">
    <subcellularLocation>
        <location evidence="1">Cell inner membrane</location>
        <topology evidence="1">Multi-pass membrane protein</topology>
    </subcellularLocation>
</comment>
<comment type="similarity">
    <text evidence="1">Belongs to the KdpA family.</text>
</comment>
<feature type="chain" id="PRO_0000166488" description="Potassium-transporting ATPase potassium-binding subunit">
    <location>
        <begin position="1"/>
        <end position="602"/>
    </location>
</feature>
<feature type="transmembrane region" description="Helical" evidence="1">
    <location>
        <begin position="3"/>
        <end position="23"/>
    </location>
</feature>
<feature type="transmembrane region" description="Helical" evidence="1">
    <location>
        <begin position="64"/>
        <end position="84"/>
    </location>
</feature>
<feature type="transmembrane region" description="Helical" evidence="1">
    <location>
        <begin position="135"/>
        <end position="155"/>
    </location>
</feature>
<feature type="transmembrane region" description="Helical" evidence="1">
    <location>
        <begin position="178"/>
        <end position="198"/>
    </location>
</feature>
<feature type="transmembrane region" description="Helical" evidence="1">
    <location>
        <begin position="282"/>
        <end position="302"/>
    </location>
</feature>
<feature type="transmembrane region" description="Helical" evidence="1">
    <location>
        <begin position="313"/>
        <end position="333"/>
    </location>
</feature>
<feature type="transmembrane region" description="Helical" evidence="1">
    <location>
        <begin position="418"/>
        <end position="438"/>
    </location>
</feature>
<feature type="transmembrane region" description="Helical" evidence="1">
    <location>
        <begin position="456"/>
        <end position="476"/>
    </location>
</feature>
<feature type="transmembrane region" description="Helical" evidence="1">
    <location>
        <begin position="522"/>
        <end position="542"/>
    </location>
</feature>
<feature type="transmembrane region" description="Helical" evidence="1">
    <location>
        <begin position="565"/>
        <end position="585"/>
    </location>
</feature>
<name>KDPA_BURPS</name>
<reference key="1">
    <citation type="journal article" date="2004" name="Proc. Natl. Acad. Sci. U.S.A.">
        <title>Genomic plasticity of the causative agent of melioidosis, Burkholderia pseudomallei.</title>
        <authorList>
            <person name="Holden M.T.G."/>
            <person name="Titball R.W."/>
            <person name="Peacock S.J."/>
            <person name="Cerdeno-Tarraga A.-M."/>
            <person name="Atkins T."/>
            <person name="Crossman L.C."/>
            <person name="Pitt T."/>
            <person name="Churcher C."/>
            <person name="Mungall K.L."/>
            <person name="Bentley S.D."/>
            <person name="Sebaihia M."/>
            <person name="Thomson N.R."/>
            <person name="Bason N."/>
            <person name="Beacham I.R."/>
            <person name="Brooks K."/>
            <person name="Brown K.A."/>
            <person name="Brown N.F."/>
            <person name="Challis G.L."/>
            <person name="Cherevach I."/>
            <person name="Chillingworth T."/>
            <person name="Cronin A."/>
            <person name="Crossett B."/>
            <person name="Davis P."/>
            <person name="DeShazer D."/>
            <person name="Feltwell T."/>
            <person name="Fraser A."/>
            <person name="Hance Z."/>
            <person name="Hauser H."/>
            <person name="Holroyd S."/>
            <person name="Jagels K."/>
            <person name="Keith K.E."/>
            <person name="Maddison M."/>
            <person name="Moule S."/>
            <person name="Price C."/>
            <person name="Quail M.A."/>
            <person name="Rabbinowitsch E."/>
            <person name="Rutherford K."/>
            <person name="Sanders M."/>
            <person name="Simmonds M."/>
            <person name="Songsivilai S."/>
            <person name="Stevens K."/>
            <person name="Tumapa S."/>
            <person name="Vesaratchavest M."/>
            <person name="Whitehead S."/>
            <person name="Yeats C."/>
            <person name="Barrell B.G."/>
            <person name="Oyston P.C.F."/>
            <person name="Parkhill J."/>
        </authorList>
    </citation>
    <scope>NUCLEOTIDE SEQUENCE [LARGE SCALE GENOMIC DNA]</scope>
    <source>
        <strain>K96243</strain>
    </source>
</reference>